<accession>B0BZL1</accession>
<comment type="function">
    <text evidence="1">F(1)F(0) ATP synthase produces ATP from ADP in the presence of a proton or sodium gradient. F-type ATPases consist of two structural domains, F(1) containing the extramembraneous catalytic core and F(0) containing the membrane proton channel, linked together by a central stalk and a peripheral stalk. During catalysis, ATP synthesis in the catalytic domain of F(1) is coupled via a rotary mechanism of the central stalk subunits to proton translocation.</text>
</comment>
<comment type="function">
    <text evidence="1">This protein is part of the stalk that links CF(0) to CF(1). It either transmits conformational changes from CF(0) to CF(1) or is implicated in proton conduction.</text>
</comment>
<comment type="subunit">
    <text evidence="1">F-type ATPases have 2 components, F(1) - the catalytic core - and F(0) - the membrane proton channel. F(1) has five subunits: alpha(3), beta(3), gamma(1), delta(1), epsilon(1). CF(0) has four main subunits: a(1), b(1), b'(1) and c(10-14). The alpha and beta chains form an alternating ring which encloses part of the gamma chain. F(1) is attached to F(0) by a central stalk formed by the gamma and epsilon chains, while a peripheral stalk is formed by the delta, b and b' chains.</text>
</comment>
<comment type="subcellular location">
    <subcellularLocation>
        <location evidence="1">Cellular thylakoid membrane</location>
        <topology evidence="1">Peripheral membrane protein</topology>
    </subcellularLocation>
</comment>
<comment type="similarity">
    <text evidence="1">Belongs to the ATPase delta chain family.</text>
</comment>
<organism>
    <name type="scientific">Acaryochloris marina (strain MBIC 11017)</name>
    <dbReference type="NCBI Taxonomy" id="329726"/>
    <lineage>
        <taxon>Bacteria</taxon>
        <taxon>Bacillati</taxon>
        <taxon>Cyanobacteriota</taxon>
        <taxon>Cyanophyceae</taxon>
        <taxon>Acaryochloridales</taxon>
        <taxon>Acaryochloridaceae</taxon>
        <taxon>Acaryochloris</taxon>
    </lineage>
</organism>
<proteinExistence type="inferred from homology"/>
<protein>
    <recommendedName>
        <fullName evidence="1">ATP synthase subunit delta</fullName>
    </recommendedName>
    <alternativeName>
        <fullName evidence="1">ATP synthase F(1) sector subunit delta</fullName>
    </alternativeName>
    <alternativeName>
        <fullName evidence="1">F-type ATPase subunit delta</fullName>
        <shortName evidence="1">F-ATPase subunit delta</shortName>
    </alternativeName>
</protein>
<evidence type="ECO:0000255" key="1">
    <source>
        <dbReference type="HAMAP-Rule" id="MF_01416"/>
    </source>
</evidence>
<keyword id="KW-0066">ATP synthesis</keyword>
<keyword id="KW-0139">CF(1)</keyword>
<keyword id="KW-0375">Hydrogen ion transport</keyword>
<keyword id="KW-0406">Ion transport</keyword>
<keyword id="KW-0472">Membrane</keyword>
<keyword id="KW-1185">Reference proteome</keyword>
<keyword id="KW-0793">Thylakoid</keyword>
<keyword id="KW-0813">Transport</keyword>
<dbReference type="EMBL" id="CP000828">
    <property type="protein sequence ID" value="ABW25937.1"/>
    <property type="molecule type" value="Genomic_DNA"/>
</dbReference>
<dbReference type="RefSeq" id="WP_012161507.1">
    <property type="nucleotide sequence ID" value="NC_009925.1"/>
</dbReference>
<dbReference type="SMR" id="B0BZL1"/>
<dbReference type="STRING" id="329726.AM1_0895"/>
<dbReference type="KEGG" id="amr:AM1_0895"/>
<dbReference type="eggNOG" id="COG0712">
    <property type="taxonomic scope" value="Bacteria"/>
</dbReference>
<dbReference type="HOGENOM" id="CLU_085114_4_0_3"/>
<dbReference type="OrthoDB" id="9802471at2"/>
<dbReference type="Proteomes" id="UP000000268">
    <property type="component" value="Chromosome"/>
</dbReference>
<dbReference type="GO" id="GO:0031676">
    <property type="term" value="C:plasma membrane-derived thylakoid membrane"/>
    <property type="evidence" value="ECO:0007669"/>
    <property type="project" value="UniProtKB-SubCell"/>
</dbReference>
<dbReference type="GO" id="GO:0045259">
    <property type="term" value="C:proton-transporting ATP synthase complex"/>
    <property type="evidence" value="ECO:0007669"/>
    <property type="project" value="UniProtKB-KW"/>
</dbReference>
<dbReference type="GO" id="GO:0046933">
    <property type="term" value="F:proton-transporting ATP synthase activity, rotational mechanism"/>
    <property type="evidence" value="ECO:0007669"/>
    <property type="project" value="UniProtKB-UniRule"/>
</dbReference>
<dbReference type="Gene3D" id="1.10.520.20">
    <property type="entry name" value="N-terminal domain of the delta subunit of the F1F0-ATP synthase"/>
    <property type="match status" value="1"/>
</dbReference>
<dbReference type="HAMAP" id="MF_01416">
    <property type="entry name" value="ATP_synth_delta_bact"/>
    <property type="match status" value="1"/>
</dbReference>
<dbReference type="InterPro" id="IPR026015">
    <property type="entry name" value="ATP_synth_OSCP/delta_N_sf"/>
</dbReference>
<dbReference type="InterPro" id="IPR020781">
    <property type="entry name" value="ATPase_OSCP/d_CS"/>
</dbReference>
<dbReference type="InterPro" id="IPR000711">
    <property type="entry name" value="ATPase_OSCP/dsu"/>
</dbReference>
<dbReference type="NCBIfam" id="TIGR01145">
    <property type="entry name" value="ATP_synt_delta"/>
    <property type="match status" value="1"/>
</dbReference>
<dbReference type="PANTHER" id="PTHR11910">
    <property type="entry name" value="ATP SYNTHASE DELTA CHAIN"/>
    <property type="match status" value="1"/>
</dbReference>
<dbReference type="Pfam" id="PF00213">
    <property type="entry name" value="OSCP"/>
    <property type="match status" value="1"/>
</dbReference>
<dbReference type="PRINTS" id="PR00125">
    <property type="entry name" value="ATPASEDELTA"/>
</dbReference>
<dbReference type="SUPFAM" id="SSF47928">
    <property type="entry name" value="N-terminal domain of the delta subunit of the F1F0-ATP synthase"/>
    <property type="match status" value="1"/>
</dbReference>
<dbReference type="PROSITE" id="PS00389">
    <property type="entry name" value="ATPASE_DELTA"/>
    <property type="match status" value="1"/>
</dbReference>
<gene>
    <name evidence="1" type="primary">atpH</name>
    <name evidence="1" type="synonym">atpD</name>
    <name type="ordered locus">AM1_0895</name>
</gene>
<name>ATPD_ACAM1</name>
<sequence>MTQSTVSSTIVEPYAEALMSVAQSNNLTNQIGEDVSFVLSLLQTSDDLKDFLVNPLTPADAQKAVLRQLAESRVQKQFFNFLLLLIDRRRIIFLEGICKYYQALLRKLNNTVLAEVTSTVELTDEQRHAITDKVKHMSQAAQVDLETSIDPDLIGGVIIKIGSQVLDASIRGQLRRMNSSITSLS</sequence>
<reference key="1">
    <citation type="journal article" date="2008" name="Proc. Natl. Acad. Sci. U.S.A.">
        <title>Niche adaptation and genome expansion in the chlorophyll d-producing cyanobacterium Acaryochloris marina.</title>
        <authorList>
            <person name="Swingley W.D."/>
            <person name="Chen M."/>
            <person name="Cheung P.C."/>
            <person name="Conrad A.L."/>
            <person name="Dejesa L.C."/>
            <person name="Hao J."/>
            <person name="Honchak B.M."/>
            <person name="Karbach L.E."/>
            <person name="Kurdoglu A."/>
            <person name="Lahiri S."/>
            <person name="Mastrian S.D."/>
            <person name="Miyashita H."/>
            <person name="Page L."/>
            <person name="Ramakrishna P."/>
            <person name="Satoh S."/>
            <person name="Sattley W.M."/>
            <person name="Shimada Y."/>
            <person name="Taylor H.L."/>
            <person name="Tomo T."/>
            <person name="Tsuchiya T."/>
            <person name="Wang Z.T."/>
            <person name="Raymond J."/>
            <person name="Mimuro M."/>
            <person name="Blankenship R.E."/>
            <person name="Touchman J.W."/>
        </authorList>
    </citation>
    <scope>NUCLEOTIDE SEQUENCE [LARGE SCALE GENOMIC DNA]</scope>
    <source>
        <strain>MBIC 11017</strain>
    </source>
</reference>
<feature type="chain" id="PRO_1000184627" description="ATP synthase subunit delta">
    <location>
        <begin position="1"/>
        <end position="185"/>
    </location>
</feature>